<sequence length="313" mass="37550">MANRTVKDANSVHGTNPQYLVEKIIRTRIYESKYWKEECFGLTAELVVDKAMELKFVGGVYGGNVKPTPFLCLTLKMLQIQPEKDIIVEFIKNEDFKYVRLLGAMYMRLTGTSVDCYKYLEPLYNDYRKIKSQNRNGEFELMHVDEFIDELLHAERMCDIILPRLQKRQVLEEAELLDPRISALEEDLDEVETSEEEDDEDEKPERMQSPEPHRRSYRDMDRPRRSPSPRYRRSRSPRRRSRSPKRRSPSPRRERDRDRHRSKSPRRHRSRSRERRHRSKSPGHHRSHRHRSHSKSPESRSKKSHKRSRRGNE</sequence>
<comment type="function">
    <text evidence="1">Involved in pre-mRNA splicing as a component of the spliceosome.</text>
</comment>
<comment type="subunit">
    <text evidence="1">Component of the spliceosome B complex.</text>
</comment>
<comment type="subcellular location">
    <subcellularLocation>
        <location evidence="1">Nucleus</location>
    </subcellularLocation>
</comment>
<comment type="similarity">
    <text evidence="4">Belongs to the PRP38 family.</text>
</comment>
<proteinExistence type="evidence at transcript level"/>
<protein>
    <recommendedName>
        <fullName>Pre-mRNA-splicing factor 38A</fullName>
    </recommendedName>
</protein>
<accession>Q6DHU4</accession>
<accession>A7MCG8</accession>
<feature type="chain" id="PRO_0000287276" description="Pre-mRNA-splicing factor 38A">
    <location>
        <begin position="1"/>
        <end position="313"/>
    </location>
</feature>
<feature type="region of interest" description="N-terminal protein interaction domain" evidence="1">
    <location>
        <begin position="1"/>
        <end position="179"/>
    </location>
</feature>
<feature type="region of interest" description="Disordered" evidence="3">
    <location>
        <begin position="182"/>
        <end position="313"/>
    </location>
</feature>
<feature type="coiled-coil region" evidence="2">
    <location>
        <begin position="172"/>
        <end position="201"/>
    </location>
</feature>
<feature type="compositionally biased region" description="Acidic residues" evidence="3">
    <location>
        <begin position="184"/>
        <end position="202"/>
    </location>
</feature>
<feature type="compositionally biased region" description="Basic and acidic residues" evidence="3">
    <location>
        <begin position="203"/>
        <end position="224"/>
    </location>
</feature>
<feature type="compositionally biased region" description="Basic residues" evidence="3">
    <location>
        <begin position="225"/>
        <end position="250"/>
    </location>
</feature>
<feature type="compositionally biased region" description="Basic residues" evidence="3">
    <location>
        <begin position="260"/>
        <end position="294"/>
    </location>
</feature>
<feature type="compositionally biased region" description="Basic residues" evidence="3">
    <location>
        <begin position="302"/>
        <end position="313"/>
    </location>
</feature>
<dbReference type="EMBL" id="BC075873">
    <property type="protein sequence ID" value="AAH75873.1"/>
    <property type="molecule type" value="mRNA"/>
</dbReference>
<dbReference type="EMBL" id="BC152173">
    <property type="protein sequence ID" value="AAI52174.1"/>
    <property type="molecule type" value="mRNA"/>
</dbReference>
<dbReference type="RefSeq" id="NP_001003483.1">
    <property type="nucleotide sequence ID" value="NM_001003483.2"/>
</dbReference>
<dbReference type="SMR" id="Q6DHU4"/>
<dbReference type="FunCoup" id="Q6DHU4">
    <property type="interactions" value="2271"/>
</dbReference>
<dbReference type="STRING" id="7955.ENSDARP00000057289"/>
<dbReference type="PaxDb" id="7955-ENSDARP00000057289"/>
<dbReference type="Ensembl" id="ENSDART00000057290">
    <property type="protein sequence ID" value="ENSDARP00000057289"/>
    <property type="gene ID" value="ENSDARG00000039213"/>
</dbReference>
<dbReference type="GeneID" id="445089"/>
<dbReference type="KEGG" id="dre:445089"/>
<dbReference type="AGR" id="ZFIN:ZDB-GENE-040801-225"/>
<dbReference type="CTD" id="84950"/>
<dbReference type="ZFIN" id="ZDB-GENE-040801-225">
    <property type="gene designation" value="prpf38a"/>
</dbReference>
<dbReference type="eggNOG" id="KOG2889">
    <property type="taxonomic scope" value="Eukaryota"/>
</dbReference>
<dbReference type="HOGENOM" id="CLU_039466_1_0_1"/>
<dbReference type="InParanoid" id="Q6DHU4"/>
<dbReference type="OMA" id="HTYWKEQ"/>
<dbReference type="OrthoDB" id="190958at2759"/>
<dbReference type="PhylomeDB" id="Q6DHU4"/>
<dbReference type="TreeFam" id="TF105910"/>
<dbReference type="PRO" id="PR:Q6DHU4"/>
<dbReference type="Proteomes" id="UP000000437">
    <property type="component" value="Alternate scaffold 6"/>
</dbReference>
<dbReference type="Proteomes" id="UP000000437">
    <property type="component" value="Chromosome 6"/>
</dbReference>
<dbReference type="Bgee" id="ENSDARG00000039213">
    <property type="expression patterns" value="Expressed in ovary and 29 other cell types or tissues"/>
</dbReference>
<dbReference type="GO" id="GO:0005634">
    <property type="term" value="C:nucleus"/>
    <property type="evidence" value="ECO:0000250"/>
    <property type="project" value="UniProtKB"/>
</dbReference>
<dbReference type="GO" id="GO:0071011">
    <property type="term" value="C:precatalytic spliceosome"/>
    <property type="evidence" value="ECO:0000318"/>
    <property type="project" value="GO_Central"/>
</dbReference>
<dbReference type="GO" id="GO:0071005">
    <property type="term" value="C:U2-type precatalytic spliceosome"/>
    <property type="evidence" value="ECO:0000250"/>
    <property type="project" value="UniProtKB"/>
</dbReference>
<dbReference type="GO" id="GO:0000398">
    <property type="term" value="P:mRNA splicing, via spliceosome"/>
    <property type="evidence" value="ECO:0000250"/>
    <property type="project" value="UniProtKB"/>
</dbReference>
<dbReference type="InterPro" id="IPR005037">
    <property type="entry name" value="PRP38"/>
</dbReference>
<dbReference type="InterPro" id="IPR024767">
    <property type="entry name" value="PRP38_C"/>
</dbReference>
<dbReference type="PANTHER" id="PTHR23142">
    <property type="entry name" value="PRE-MRNA-SPLICING FACTOR 38A-RELATED"/>
    <property type="match status" value="1"/>
</dbReference>
<dbReference type="Pfam" id="PF03371">
    <property type="entry name" value="PRP38"/>
    <property type="match status" value="1"/>
</dbReference>
<dbReference type="Pfam" id="PF12871">
    <property type="entry name" value="PRP38_assoc"/>
    <property type="match status" value="1"/>
</dbReference>
<organism>
    <name type="scientific">Danio rerio</name>
    <name type="common">Zebrafish</name>
    <name type="synonym">Brachydanio rerio</name>
    <dbReference type="NCBI Taxonomy" id="7955"/>
    <lineage>
        <taxon>Eukaryota</taxon>
        <taxon>Metazoa</taxon>
        <taxon>Chordata</taxon>
        <taxon>Craniata</taxon>
        <taxon>Vertebrata</taxon>
        <taxon>Euteleostomi</taxon>
        <taxon>Actinopterygii</taxon>
        <taxon>Neopterygii</taxon>
        <taxon>Teleostei</taxon>
        <taxon>Ostariophysi</taxon>
        <taxon>Cypriniformes</taxon>
        <taxon>Danionidae</taxon>
        <taxon>Danioninae</taxon>
        <taxon>Danio</taxon>
    </lineage>
</organism>
<evidence type="ECO:0000250" key="1">
    <source>
        <dbReference type="UniProtKB" id="Q8NAV1"/>
    </source>
</evidence>
<evidence type="ECO:0000255" key="2"/>
<evidence type="ECO:0000256" key="3">
    <source>
        <dbReference type="SAM" id="MobiDB-lite"/>
    </source>
</evidence>
<evidence type="ECO:0000305" key="4"/>
<gene>
    <name type="primary">prpf38a</name>
    <name type="ORF">zgc:92059</name>
</gene>
<reference key="1">
    <citation type="submission" date="2004-07" db="EMBL/GenBank/DDBJ databases">
        <authorList>
            <consortium name="NIH - Zebrafish Gene Collection (ZGC) project"/>
        </authorList>
    </citation>
    <scope>NUCLEOTIDE SEQUENCE [LARGE SCALE MRNA]</scope>
    <source>
        <tissue>Embryo</tissue>
    </source>
</reference>
<name>PR38A_DANRE</name>
<keyword id="KW-0175">Coiled coil</keyword>
<keyword id="KW-0507">mRNA processing</keyword>
<keyword id="KW-0508">mRNA splicing</keyword>
<keyword id="KW-0539">Nucleus</keyword>
<keyword id="KW-1185">Reference proteome</keyword>
<keyword id="KW-0747">Spliceosome</keyword>